<name>MOA2_CAEEL</name>
<proteinExistence type="predicted"/>
<evidence type="ECO:0000256" key="1">
    <source>
        <dbReference type="SAM" id="MobiDB-lite"/>
    </source>
</evidence>
<evidence type="ECO:0000305" key="2"/>
<evidence type="ECO:0000312" key="3">
    <source>
        <dbReference type="WormBase" id="B0495.6"/>
    </source>
</evidence>
<accession>Q09215</accession>
<feature type="chain" id="PRO_0000065087" description="Protein moa-2" evidence="2">
    <location>
        <begin position="1"/>
        <end position="87"/>
    </location>
</feature>
<feature type="region of interest" description="Disordered" evidence="1">
    <location>
        <begin position="23"/>
        <end position="87"/>
    </location>
</feature>
<feature type="compositionally biased region" description="Basic and acidic residues" evidence="1">
    <location>
        <begin position="26"/>
        <end position="39"/>
    </location>
</feature>
<feature type="compositionally biased region" description="Basic and acidic residues" evidence="1">
    <location>
        <begin position="50"/>
        <end position="63"/>
    </location>
</feature>
<keyword id="KW-1185">Reference proteome</keyword>
<reference key="1">
    <citation type="journal article" date="1998" name="Science">
        <title>Genome sequence of the nematode C. elegans: a platform for investigating biology.</title>
        <authorList>
            <consortium name="The C. elegans sequencing consortium"/>
        </authorList>
    </citation>
    <scope>NUCLEOTIDE SEQUENCE [LARGE SCALE GENOMIC DNA]</scope>
    <source>
        <strain>Bristol N2</strain>
    </source>
</reference>
<dbReference type="EMBL" id="FO080132">
    <property type="protein sequence ID" value="CCD61474.1"/>
    <property type="molecule type" value="Genomic_DNA"/>
</dbReference>
<dbReference type="PIR" id="B88216">
    <property type="entry name" value="B88216"/>
</dbReference>
<dbReference type="RefSeq" id="NP_495616.1">
    <property type="nucleotide sequence ID" value="NM_063215.3"/>
</dbReference>
<dbReference type="SMR" id="Q09215"/>
<dbReference type="BioGRID" id="46867">
    <property type="interactions" value="2"/>
</dbReference>
<dbReference type="FunCoup" id="Q09215">
    <property type="interactions" value="3"/>
</dbReference>
<dbReference type="STRING" id="6239.B0495.6.1"/>
<dbReference type="PaxDb" id="6239-B0495.6"/>
<dbReference type="PeptideAtlas" id="Q09215"/>
<dbReference type="EnsemblMetazoa" id="B0495.6.1">
    <property type="protein sequence ID" value="B0495.6.1"/>
    <property type="gene ID" value="WBGene00015205"/>
</dbReference>
<dbReference type="GeneID" id="182004"/>
<dbReference type="KEGG" id="cel:CELE_B0495.6"/>
<dbReference type="UCSC" id="B0495.6">
    <property type="organism name" value="c. elegans"/>
</dbReference>
<dbReference type="AGR" id="WB:WBGene00015205"/>
<dbReference type="CTD" id="182004"/>
<dbReference type="WormBase" id="B0495.6">
    <property type="protein sequence ID" value="CE01764"/>
    <property type="gene ID" value="WBGene00015205"/>
    <property type="gene designation" value="moa-2"/>
</dbReference>
<dbReference type="eggNOG" id="KOG3485">
    <property type="taxonomic scope" value="Eukaryota"/>
</dbReference>
<dbReference type="HOGENOM" id="CLU_2485359_0_0_1"/>
<dbReference type="InParanoid" id="Q09215"/>
<dbReference type="OrthoDB" id="274726at2759"/>
<dbReference type="PRO" id="PR:Q09215"/>
<dbReference type="Proteomes" id="UP000001940">
    <property type="component" value="Chromosome II"/>
</dbReference>
<dbReference type="Bgee" id="WBGene00015205">
    <property type="expression patterns" value="Expressed in embryo and 4 other cell types or tissues"/>
</dbReference>
<sequence length="87" mass="9868">MALPGERFHVLAQLEHLQSKYTGTAMRHEPSRMDCESAPRHSRLSNVSSRNEHVYCRCGEREPSSNPLQSDKSHDSAVWTASREESS</sequence>
<gene>
    <name evidence="3" type="primary">moa-2</name>
    <name evidence="3" type="ORF">B0495.6</name>
</gene>
<organism>
    <name type="scientific">Caenorhabditis elegans</name>
    <dbReference type="NCBI Taxonomy" id="6239"/>
    <lineage>
        <taxon>Eukaryota</taxon>
        <taxon>Metazoa</taxon>
        <taxon>Ecdysozoa</taxon>
        <taxon>Nematoda</taxon>
        <taxon>Chromadorea</taxon>
        <taxon>Rhabditida</taxon>
        <taxon>Rhabditina</taxon>
        <taxon>Rhabditomorpha</taxon>
        <taxon>Rhabditoidea</taxon>
        <taxon>Rhabditidae</taxon>
        <taxon>Peloderinae</taxon>
        <taxon>Caenorhabditis</taxon>
    </lineage>
</organism>
<protein>
    <recommendedName>
        <fullName evidence="3">Protein moa-2</fullName>
    </recommendedName>
</protein>